<organism>
    <name type="scientific">Arabidopsis thaliana</name>
    <name type="common">Mouse-ear cress</name>
    <dbReference type="NCBI Taxonomy" id="3702"/>
    <lineage>
        <taxon>Eukaryota</taxon>
        <taxon>Viridiplantae</taxon>
        <taxon>Streptophyta</taxon>
        <taxon>Embryophyta</taxon>
        <taxon>Tracheophyta</taxon>
        <taxon>Spermatophyta</taxon>
        <taxon>Magnoliopsida</taxon>
        <taxon>eudicotyledons</taxon>
        <taxon>Gunneridae</taxon>
        <taxon>Pentapetalae</taxon>
        <taxon>rosids</taxon>
        <taxon>malvids</taxon>
        <taxon>Brassicales</taxon>
        <taxon>Brassicaceae</taxon>
        <taxon>Camelineae</taxon>
        <taxon>Arabidopsis</taxon>
    </lineage>
</organism>
<sequence length="531" mass="59462">MDTLFRLVSLQQQQQSDSIITNQSSLSRTSTTTTGSPQTAYHYNFPQNDVVEECFNFFMDEEDLSSSSSHHNHHNHNNPNTYYSPFTTPTQYHPATSSTPSSTAAAAALASPYSSSGHHNDPSAFSIPQTPPSFDFSANAKWADSVLLEAARAFSDKDTARAQQILWTLNELSSPYGDTEQKLASYFLQALFNRMTGSGERCYRTMVTAAATEKTCSFESTRKTVLKFQEVSPWATFGHVAANGAILEAVDGEAKIHIVDISSTFCTQWPTLLEALATRSDDTPHLRLTTVVVANKFVNDQTASHRMMKEIGNRMEKFARLMGVPFKFNIIHHVGDLSEFDLNELDVKPDEVLAINCVGAMHGIASRGSPRDAVISSFRRLRPRIVTVVEEEADLVGEEEGGFDDEFLRGFGECLRWFRVCFESWEESFPRTSNERLMLERAAGRAIVDLVACEPSDSTERRETARKWSRRMRNSGFGAVGYSDEVADDVRALLRRYKEGVWSMVQCPDAAGIFLCWRDQPVVWASAWRPT</sequence>
<proteinExistence type="evidence at protein level"/>
<feature type="chain" id="PRO_0000329423" description="Protein SHORT-ROOT">
    <location>
        <begin position="1"/>
        <end position="531"/>
    </location>
</feature>
<feature type="domain" description="GRAS" evidence="1">
    <location>
        <begin position="134"/>
        <end position="529"/>
    </location>
</feature>
<feature type="region of interest" description="Disordered" evidence="2">
    <location>
        <begin position="14"/>
        <end position="40"/>
    </location>
</feature>
<feature type="region of interest" description="Disordered" evidence="2">
    <location>
        <begin position="65"/>
        <end position="103"/>
    </location>
</feature>
<feature type="region of interest" description="Leucine repeat I (LRI)" evidence="1">
    <location>
        <begin position="141"/>
        <end position="206"/>
    </location>
</feature>
<feature type="region of interest" description="VHIID" evidence="1">
    <location>
        <begin position="225"/>
        <end position="290"/>
    </location>
</feature>
<feature type="region of interest" description="Leucine repeat II (LRII)" evidence="1">
    <location>
        <begin position="310"/>
        <end position="343"/>
    </location>
</feature>
<feature type="region of interest" description="PFYRE" evidence="1">
    <location>
        <begin position="353"/>
        <end position="449"/>
    </location>
</feature>
<feature type="region of interest" description="SAW" evidence="1">
    <location>
        <begin position="452"/>
        <end position="529"/>
    </location>
</feature>
<feature type="short sequence motif" description="VHIID" evidence="1">
    <location>
        <begin position="256"/>
        <end position="260"/>
    </location>
</feature>
<feature type="compositionally biased region" description="Low complexity" evidence="2">
    <location>
        <begin position="14"/>
        <end position="39"/>
    </location>
</feature>
<feature type="compositionally biased region" description="Polar residues" evidence="2">
    <location>
        <begin position="81"/>
        <end position="93"/>
    </location>
</feature>
<feature type="compositionally biased region" description="Low complexity" evidence="2">
    <location>
        <begin position="94"/>
        <end position="103"/>
    </location>
</feature>
<feature type="mutagenesis site" description="Impaired SCR binding (10 percent); when associated with G-167." evidence="17">
    <original>L</original>
    <variation>G</variation>
    <location>
        <position position="166"/>
    </location>
</feature>
<feature type="mutagenesis site" description="Reduced SCR binding (30 percent). Impaired SCR binding (5-10 percent); when associated with A-176 or G-166." evidence="17">
    <original>W</original>
    <variation>G</variation>
    <location>
        <position position="167"/>
    </location>
</feature>
<feature type="mutagenesis site" description="Reduced SCR binding (50 percent); when associated with A-171." evidence="17">
    <original>N</original>
    <variation>A</variation>
    <location>
        <position position="170"/>
    </location>
</feature>
<feature type="mutagenesis site" description="Reduced SCR binding (55 percent). Reduced SCR binding (50 percent); when associated with A-170." evidence="17">
    <original>E</original>
    <variation>A</variation>
    <location>
        <position position="171"/>
    </location>
</feature>
<feature type="mutagenesis site" description="Reduced SCR binding (50 percent). Impaired SCR binding (5 percent); when associated with G-167." evidence="17">
    <original>Y</original>
    <variation>A</variation>
    <location>
        <position position="176"/>
    </location>
</feature>
<feature type="mutagenesis site" description="Loss of both export from the stele and activity." evidence="8">
    <original>T</original>
    <variation>I</variation>
    <variation>E</variation>
    <location>
        <position position="289"/>
    </location>
</feature>
<feature type="mutagenesis site" description="No effect on activity, but loss of movment into the endodermis and reduction in the nuclear localization in the stele." evidence="13">
    <original>LNELDV</original>
    <variation>AAA</variation>
    <location>
        <begin position="342"/>
        <end position="347"/>
    </location>
</feature>
<feature type="mutagenesis site" description="Reduced SCR binding (50 percent); when associated with A-441." evidence="17">
    <original>R</original>
    <variation>A</variation>
    <location>
        <position position="436"/>
    </location>
</feature>
<feature type="mutagenesis site" description="Reduced SCR binding (75 percent). Reduced SCR binding (50 percent); when associated with A-436." evidence="17">
    <original>R</original>
    <variation>A</variation>
    <location>
        <position position="441"/>
    </location>
</feature>
<feature type="sequence conflict" description="In Ref. 4; AAL69513." evidence="21" ref="4">
    <original>P</original>
    <variation>S</variation>
    <location>
        <position position="233"/>
    </location>
</feature>
<feature type="helix" evidence="24">
    <location>
        <begin position="122"/>
        <end position="125"/>
    </location>
</feature>
<feature type="helix" evidence="24">
    <location>
        <begin position="142"/>
        <end position="156"/>
    </location>
</feature>
<feature type="helix" evidence="24">
    <location>
        <begin position="159"/>
        <end position="172"/>
    </location>
</feature>
<feature type="helix" evidence="24">
    <location>
        <begin position="179"/>
        <end position="195"/>
    </location>
</feature>
<feature type="helix" evidence="24">
    <location>
        <begin position="199"/>
        <end position="210"/>
    </location>
</feature>
<feature type="helix" evidence="24">
    <location>
        <begin position="216"/>
        <end position="231"/>
    </location>
</feature>
<feature type="helix" evidence="24">
    <location>
        <begin position="233"/>
        <end position="235"/>
    </location>
</feature>
<feature type="helix" evidence="24">
    <location>
        <begin position="237"/>
        <end position="250"/>
    </location>
</feature>
<feature type="strand" evidence="24">
    <location>
        <begin position="254"/>
        <end position="261"/>
    </location>
</feature>
<feature type="turn" evidence="24">
    <location>
        <begin position="265"/>
        <end position="268"/>
    </location>
</feature>
<feature type="helix" evidence="24">
    <location>
        <begin position="270"/>
        <end position="279"/>
    </location>
</feature>
<feature type="strand" evidence="24">
    <location>
        <begin position="285"/>
        <end position="294"/>
    </location>
</feature>
<feature type="strand" evidence="24">
    <location>
        <begin position="296"/>
        <end position="298"/>
    </location>
</feature>
<feature type="helix" evidence="24">
    <location>
        <begin position="301"/>
        <end position="322"/>
    </location>
</feature>
<feature type="strand" evidence="24">
    <location>
        <begin position="326"/>
        <end position="335"/>
    </location>
</feature>
<feature type="helix" evidence="24">
    <location>
        <begin position="337"/>
        <end position="339"/>
    </location>
</feature>
<feature type="helix" evidence="24">
    <location>
        <begin position="342"/>
        <end position="344"/>
    </location>
</feature>
<feature type="strand" evidence="24">
    <location>
        <begin position="351"/>
        <end position="359"/>
    </location>
</feature>
<feature type="helix" evidence="24">
    <location>
        <begin position="361"/>
        <end position="363"/>
    </location>
</feature>
<feature type="strand" evidence="24">
    <location>
        <begin position="367"/>
        <end position="369"/>
    </location>
</feature>
<feature type="helix" evidence="24">
    <location>
        <begin position="370"/>
        <end position="380"/>
    </location>
</feature>
<feature type="strand" evidence="24">
    <location>
        <begin position="384"/>
        <end position="391"/>
    </location>
</feature>
<feature type="helix" evidence="24">
    <location>
        <begin position="405"/>
        <end position="428"/>
    </location>
</feature>
<feature type="helix" evidence="24">
    <location>
        <begin position="434"/>
        <end position="452"/>
    </location>
</feature>
<feature type="helix" evidence="24">
    <location>
        <begin position="455"/>
        <end position="457"/>
    </location>
</feature>
<feature type="helix" evidence="24">
    <location>
        <begin position="465"/>
        <end position="474"/>
    </location>
</feature>
<feature type="strand" evidence="24">
    <location>
        <begin position="477"/>
        <end position="479"/>
    </location>
</feature>
<feature type="helix" evidence="24">
    <location>
        <begin position="484"/>
        <end position="494"/>
    </location>
</feature>
<feature type="turn" evidence="24">
    <location>
        <begin position="499"/>
        <end position="501"/>
    </location>
</feature>
<feature type="strand" evidence="24">
    <location>
        <begin position="502"/>
        <end position="506"/>
    </location>
</feature>
<feature type="strand" evidence="24">
    <location>
        <begin position="508"/>
        <end position="517"/>
    </location>
</feature>
<feature type="strand" evidence="24">
    <location>
        <begin position="520"/>
        <end position="530"/>
    </location>
</feature>
<accession>Q9SZF7</accession>
<accession>B3DNN8</accession>
<accession>Q8RU28</accession>
<evidence type="ECO:0000255" key="1">
    <source>
        <dbReference type="PROSITE-ProRule" id="PRU01191"/>
    </source>
</evidence>
<evidence type="ECO:0000256" key="2">
    <source>
        <dbReference type="SAM" id="MobiDB-lite"/>
    </source>
</evidence>
<evidence type="ECO:0000269" key="3">
    <source>
    </source>
</evidence>
<evidence type="ECO:0000269" key="4">
    <source>
    </source>
</evidence>
<evidence type="ECO:0000269" key="5">
    <source>
    </source>
</evidence>
<evidence type="ECO:0000269" key="6">
    <source>
    </source>
</evidence>
<evidence type="ECO:0000269" key="7">
    <source>
    </source>
</evidence>
<evidence type="ECO:0000269" key="8">
    <source>
    </source>
</evidence>
<evidence type="ECO:0000269" key="9">
    <source>
    </source>
</evidence>
<evidence type="ECO:0000269" key="10">
    <source>
    </source>
</evidence>
<evidence type="ECO:0000269" key="11">
    <source>
    </source>
</evidence>
<evidence type="ECO:0000269" key="12">
    <source>
    </source>
</evidence>
<evidence type="ECO:0000269" key="13">
    <source>
    </source>
</evidence>
<evidence type="ECO:0000269" key="14">
    <source>
    </source>
</evidence>
<evidence type="ECO:0000269" key="15">
    <source>
    </source>
</evidence>
<evidence type="ECO:0000269" key="16">
    <source>
    </source>
</evidence>
<evidence type="ECO:0000269" key="17">
    <source>
    </source>
</evidence>
<evidence type="ECO:0000269" key="18">
    <source>
    </source>
</evidence>
<evidence type="ECO:0000303" key="19">
    <source>
    </source>
</evidence>
<evidence type="ECO:0000303" key="20">
    <source>
    </source>
</evidence>
<evidence type="ECO:0000305" key="21"/>
<evidence type="ECO:0000312" key="22">
    <source>
        <dbReference type="Araport" id="AT4G37650"/>
    </source>
</evidence>
<evidence type="ECO:0000312" key="23">
    <source>
        <dbReference type="EMBL" id="CAB38304.1"/>
    </source>
</evidence>
<evidence type="ECO:0007829" key="24">
    <source>
        <dbReference type="PDB" id="5B3G"/>
    </source>
</evidence>
<comment type="function">
    <text evidence="3 5 7 9 10 18">Transcription factor required for quiescent center cells specification and maintenance of surrounding stem cells, and for the asymmetric cell division involved in radial pattern formation in roots. Essential for both cell division and cell specification. Regulates the radial organization of the shoot axial organs and is required for normal shoot gravitropism. Directly controls the transcription of SCR, and when associated with SCR, of MGP, RLK, TRI, NUC and SCL3.</text>
</comment>
<comment type="subunit">
    <text evidence="9 10 11 12 14 16 17">Interacts with SCR, SCL23, JKD and MGP (PubMed:16640459, PubMed:17446396, PubMed:17785527, PubMed:18500650, PubMed:28211915). Interacts with SIEL (PubMed:21924907). Association to endosomes and intercellular movement of SHR rely on the interaction with SIEL (PubMed:25124761).</text>
</comment>
<comment type="interaction">
    <interactant intactId="EBI-1250472">
        <id>Q9SZF7</id>
    </interactant>
    <interactant intactId="EBI-1250484">
        <id>Q9M384</id>
        <label>SCR</label>
    </interactant>
    <organismsDiffer>false</organismsDiffer>
    <experiments>11</experiments>
</comment>
<comment type="subcellular location">
    <subcellularLocation>
        <location evidence="4 8 16">Cytoplasm</location>
    </subcellularLocation>
    <subcellularLocation>
        <location evidence="4 8 16">Nucleus</location>
    </subcellularLocation>
    <subcellularLocation>
        <location evidence="16">Early endosome</location>
    </subcellularLocation>
    <subcellularLocation>
        <location evidence="16">Late endosome</location>
    </subcellularLocation>
    <subcellularLocation>
        <location evidence="16">Recycling endosome</location>
    </subcellularLocation>
    <text evidence="4 8 16">Cytoplasm and nucleus in the stele (PubMed:11565032, PubMed:15498493). Restricted to the nucleus in adjacent cells (PubMed:11565032, PubMed:15498493). Localization to endosomes promotes the intercellular movement of SHR (PubMed:25124761).</text>
</comment>
<comment type="tissue specificity">
    <text evidence="3 4 6 7">Expressed in the stele and the quiescent center. Not detected in the ground tissue cell lineage. The SHR protein moves from the stele to a single layer of adjacent cells, where it enters the nucleus.</text>
</comment>
<comment type="developmental stage">
    <text evidence="3">Expressed in the procambium during embryogenesis.</text>
</comment>
<comment type="miscellaneous">
    <text evidence="13 14 15">Moves via plasmodesmata from the stele into the adjacent cell layer where it locates in the nucleus to controls SCR transcription and endodermis specification. Intact microtubules are required for cell-to-cell trafficking of SHR (PubMed:23294290). This intercellular movement is dependent upon the endosome localized protein SIEL (PubMed:21924907). It is necessary for normal patterning of the root (PubMed:19000160).</text>
</comment>
<comment type="similarity">
    <text evidence="1">Belongs to the GRAS family.</text>
</comment>
<protein>
    <recommendedName>
        <fullName evidence="19">Protein SHORT-ROOT</fullName>
        <shortName evidence="19">AtSHR</shortName>
    </recommendedName>
    <alternativeName>
        <fullName>GRAS family protein 26</fullName>
        <shortName>AtGRAS-26</shortName>
    </alternativeName>
    <alternativeName>
        <fullName evidence="20">Protein SHOOT GRAVITROPISM 7</fullName>
    </alternativeName>
</protein>
<dbReference type="EMBL" id="AF233752">
    <property type="protein sequence ID" value="AAF75234.1"/>
    <property type="molecule type" value="Genomic_DNA"/>
</dbReference>
<dbReference type="EMBL" id="AL035605">
    <property type="protein sequence ID" value="CAB38304.1"/>
    <property type="molecule type" value="Genomic_DNA"/>
</dbReference>
<dbReference type="EMBL" id="AL161591">
    <property type="protein sequence ID" value="CAB80430.1"/>
    <property type="molecule type" value="Genomic_DNA"/>
</dbReference>
<dbReference type="EMBL" id="CP002687">
    <property type="protein sequence ID" value="AEE86820.1"/>
    <property type="molecule type" value="Genomic_DNA"/>
</dbReference>
<dbReference type="EMBL" id="BT033026">
    <property type="protein sequence ID" value="ACE62894.1"/>
    <property type="molecule type" value="mRNA"/>
</dbReference>
<dbReference type="EMBL" id="AY074547">
    <property type="protein sequence ID" value="AAL69513.1"/>
    <property type="molecule type" value="mRNA"/>
</dbReference>
<dbReference type="PIR" id="T04722">
    <property type="entry name" value="T04722"/>
</dbReference>
<dbReference type="RefSeq" id="NP_195480.1">
    <property type="nucleotide sequence ID" value="NM_119928.3"/>
</dbReference>
<dbReference type="PDB" id="5B3G">
    <property type="method" value="X-ray"/>
    <property type="resolution" value="2.00 A"/>
    <property type="chains" value="B=59-531"/>
</dbReference>
<dbReference type="PDB" id="5B3H">
    <property type="method" value="X-ray"/>
    <property type="resolution" value="2.70 A"/>
    <property type="chains" value="B/E=112-531"/>
</dbReference>
<dbReference type="PDBsum" id="5B3G"/>
<dbReference type="PDBsum" id="5B3H"/>
<dbReference type="SMR" id="Q9SZF7"/>
<dbReference type="BioGRID" id="15200">
    <property type="interactions" value="3"/>
</dbReference>
<dbReference type="FunCoup" id="Q9SZF7">
    <property type="interactions" value="660"/>
</dbReference>
<dbReference type="IntAct" id="Q9SZF7">
    <property type="interactions" value="6"/>
</dbReference>
<dbReference type="STRING" id="3702.Q9SZF7"/>
<dbReference type="GlyGen" id="Q9SZF7">
    <property type="glycosylation" value="1 site"/>
</dbReference>
<dbReference type="PaxDb" id="3702-AT4G37650.1"/>
<dbReference type="ProteomicsDB" id="232977"/>
<dbReference type="EnsemblPlants" id="AT4G37650.1">
    <property type="protein sequence ID" value="AT4G37650.1"/>
    <property type="gene ID" value="AT4G37650"/>
</dbReference>
<dbReference type="GeneID" id="829919"/>
<dbReference type="Gramene" id="AT4G37650.1">
    <property type="protein sequence ID" value="AT4G37650.1"/>
    <property type="gene ID" value="AT4G37650"/>
</dbReference>
<dbReference type="KEGG" id="ath:AT4G37650"/>
<dbReference type="Araport" id="AT4G37650"/>
<dbReference type="TAIR" id="AT4G37650">
    <property type="gene designation" value="SHR"/>
</dbReference>
<dbReference type="eggNOG" id="ENOG502QQN4">
    <property type="taxonomic scope" value="Eukaryota"/>
</dbReference>
<dbReference type="HOGENOM" id="CLU_011924_5_1_1"/>
<dbReference type="InParanoid" id="Q9SZF7"/>
<dbReference type="OMA" id="IFLAWKD"/>
<dbReference type="OrthoDB" id="1913536at2759"/>
<dbReference type="PhylomeDB" id="Q9SZF7"/>
<dbReference type="PRO" id="PR:Q9SZF7"/>
<dbReference type="Proteomes" id="UP000006548">
    <property type="component" value="Chromosome 4"/>
</dbReference>
<dbReference type="ExpressionAtlas" id="Q9SZF7">
    <property type="expression patterns" value="baseline and differential"/>
</dbReference>
<dbReference type="GO" id="GO:0005769">
    <property type="term" value="C:early endosome"/>
    <property type="evidence" value="ECO:0007669"/>
    <property type="project" value="UniProtKB-SubCell"/>
</dbReference>
<dbReference type="GO" id="GO:0005770">
    <property type="term" value="C:late endosome"/>
    <property type="evidence" value="ECO:0007669"/>
    <property type="project" value="UniProtKB-SubCell"/>
</dbReference>
<dbReference type="GO" id="GO:0005634">
    <property type="term" value="C:nucleus"/>
    <property type="evidence" value="ECO:0000314"/>
    <property type="project" value="TAIR"/>
</dbReference>
<dbReference type="GO" id="GO:0055037">
    <property type="term" value="C:recycling endosome"/>
    <property type="evidence" value="ECO:0007669"/>
    <property type="project" value="UniProtKB-SubCell"/>
</dbReference>
<dbReference type="GO" id="GO:0003700">
    <property type="term" value="F:DNA-binding transcription factor activity"/>
    <property type="evidence" value="ECO:0000250"/>
    <property type="project" value="TAIR"/>
</dbReference>
<dbReference type="GO" id="GO:0043565">
    <property type="term" value="F:sequence-specific DNA binding"/>
    <property type="evidence" value="ECO:0000314"/>
    <property type="project" value="TAIR"/>
</dbReference>
<dbReference type="GO" id="GO:0000976">
    <property type="term" value="F:transcription cis-regulatory region binding"/>
    <property type="evidence" value="ECO:0000353"/>
    <property type="project" value="TAIR"/>
</dbReference>
<dbReference type="GO" id="GO:0008356">
    <property type="term" value="P:asymmetric cell division"/>
    <property type="evidence" value="ECO:0000315"/>
    <property type="project" value="TAIR"/>
</dbReference>
<dbReference type="GO" id="GO:0048366">
    <property type="term" value="P:leaf development"/>
    <property type="evidence" value="ECO:0000315"/>
    <property type="project" value="TAIR"/>
</dbReference>
<dbReference type="GO" id="GO:0045930">
    <property type="term" value="P:negative regulation of mitotic cell cycle"/>
    <property type="evidence" value="ECO:0000315"/>
    <property type="project" value="TAIR"/>
</dbReference>
<dbReference type="GO" id="GO:0009956">
    <property type="term" value="P:radial pattern formation"/>
    <property type="evidence" value="ECO:0000315"/>
    <property type="project" value="TAIR"/>
</dbReference>
<dbReference type="GO" id="GO:0032350">
    <property type="term" value="P:regulation of hormone metabolic process"/>
    <property type="evidence" value="ECO:0000303"/>
    <property type="project" value="TAIR"/>
</dbReference>
<dbReference type="InterPro" id="IPR005202">
    <property type="entry name" value="TF_GRAS"/>
</dbReference>
<dbReference type="PANTHER" id="PTHR31636">
    <property type="entry name" value="OSJNBA0084A10.13 PROTEIN-RELATED"/>
    <property type="match status" value="1"/>
</dbReference>
<dbReference type="Pfam" id="PF03514">
    <property type="entry name" value="GRAS"/>
    <property type="match status" value="1"/>
</dbReference>
<dbReference type="PROSITE" id="PS50985">
    <property type="entry name" value="GRAS"/>
    <property type="match status" value="1"/>
</dbReference>
<gene>
    <name evidence="19" type="primary">SHR</name>
    <name evidence="20" type="synonym">SGR7</name>
    <name evidence="22" type="ordered locus">At4g37650</name>
    <name evidence="23" type="ORF">F19F18.140</name>
</gene>
<reference key="1">
    <citation type="journal article" date="2000" name="Cell">
        <title>The SHORT-ROOT gene controls radial patterning of the Arabidopsis root through radial signaling.</title>
        <authorList>
            <person name="Helariutta Y."/>
            <person name="Fukaki H."/>
            <person name="Wysocka-Diller J.W."/>
            <person name="Nakajima K."/>
            <person name="Jung J."/>
            <person name="Sena G."/>
            <person name="Hauser M.-T."/>
            <person name="Benfey P.N."/>
        </authorList>
    </citation>
    <scope>NUCLEOTIDE SEQUENCE [GENOMIC DNA]</scope>
    <scope>FUNCTION</scope>
    <scope>TISSUE SPECIFICITY</scope>
    <scope>DEVELOPMENTAL STAGE</scope>
</reference>
<reference key="2">
    <citation type="journal article" date="1999" name="Nature">
        <title>Sequence and analysis of chromosome 4 of the plant Arabidopsis thaliana.</title>
        <authorList>
            <person name="Mayer K.F.X."/>
            <person name="Schueller C."/>
            <person name="Wambutt R."/>
            <person name="Murphy G."/>
            <person name="Volckaert G."/>
            <person name="Pohl T."/>
            <person name="Duesterhoeft A."/>
            <person name="Stiekema W."/>
            <person name="Entian K.-D."/>
            <person name="Terryn N."/>
            <person name="Harris B."/>
            <person name="Ansorge W."/>
            <person name="Brandt P."/>
            <person name="Grivell L.A."/>
            <person name="Rieger M."/>
            <person name="Weichselgartner M."/>
            <person name="de Simone V."/>
            <person name="Obermaier B."/>
            <person name="Mache R."/>
            <person name="Mueller M."/>
            <person name="Kreis M."/>
            <person name="Delseny M."/>
            <person name="Puigdomenech P."/>
            <person name="Watson M."/>
            <person name="Schmidtheini T."/>
            <person name="Reichert B."/>
            <person name="Portetelle D."/>
            <person name="Perez-Alonso M."/>
            <person name="Boutry M."/>
            <person name="Bancroft I."/>
            <person name="Vos P."/>
            <person name="Hoheisel J."/>
            <person name="Zimmermann W."/>
            <person name="Wedler H."/>
            <person name="Ridley P."/>
            <person name="Langham S.-A."/>
            <person name="McCullagh B."/>
            <person name="Bilham L."/>
            <person name="Robben J."/>
            <person name="van der Schueren J."/>
            <person name="Grymonprez B."/>
            <person name="Chuang Y.-J."/>
            <person name="Vandenbussche F."/>
            <person name="Braeken M."/>
            <person name="Weltjens I."/>
            <person name="Voet M."/>
            <person name="Bastiaens I."/>
            <person name="Aert R."/>
            <person name="Defoor E."/>
            <person name="Weitzenegger T."/>
            <person name="Bothe G."/>
            <person name="Ramsperger U."/>
            <person name="Hilbert H."/>
            <person name="Braun M."/>
            <person name="Holzer E."/>
            <person name="Brandt A."/>
            <person name="Peters S."/>
            <person name="van Staveren M."/>
            <person name="Dirkse W."/>
            <person name="Mooijman P."/>
            <person name="Klein Lankhorst R."/>
            <person name="Rose M."/>
            <person name="Hauf J."/>
            <person name="Koetter P."/>
            <person name="Berneiser S."/>
            <person name="Hempel S."/>
            <person name="Feldpausch M."/>
            <person name="Lamberth S."/>
            <person name="Van den Daele H."/>
            <person name="De Keyser A."/>
            <person name="Buysshaert C."/>
            <person name="Gielen J."/>
            <person name="Villarroel R."/>
            <person name="De Clercq R."/>
            <person name="van Montagu M."/>
            <person name="Rogers J."/>
            <person name="Cronin A."/>
            <person name="Quail M.A."/>
            <person name="Bray-Allen S."/>
            <person name="Clark L."/>
            <person name="Doggett J."/>
            <person name="Hall S."/>
            <person name="Kay M."/>
            <person name="Lennard N."/>
            <person name="McLay K."/>
            <person name="Mayes R."/>
            <person name="Pettett A."/>
            <person name="Rajandream M.A."/>
            <person name="Lyne M."/>
            <person name="Benes V."/>
            <person name="Rechmann S."/>
            <person name="Borkova D."/>
            <person name="Bloecker H."/>
            <person name="Scharfe M."/>
            <person name="Grimm M."/>
            <person name="Loehnert T.-H."/>
            <person name="Dose S."/>
            <person name="de Haan M."/>
            <person name="Maarse A.C."/>
            <person name="Schaefer M."/>
            <person name="Mueller-Auer S."/>
            <person name="Gabel C."/>
            <person name="Fuchs M."/>
            <person name="Fartmann B."/>
            <person name="Granderath K."/>
            <person name="Dauner D."/>
            <person name="Herzl A."/>
            <person name="Neumann S."/>
            <person name="Argiriou A."/>
            <person name="Vitale D."/>
            <person name="Liguori R."/>
            <person name="Piravandi E."/>
            <person name="Massenet O."/>
            <person name="Quigley F."/>
            <person name="Clabauld G."/>
            <person name="Muendlein A."/>
            <person name="Felber R."/>
            <person name="Schnabl S."/>
            <person name="Hiller R."/>
            <person name="Schmidt W."/>
            <person name="Lecharny A."/>
            <person name="Aubourg S."/>
            <person name="Chefdor F."/>
            <person name="Cooke R."/>
            <person name="Berger C."/>
            <person name="Monfort A."/>
            <person name="Casacuberta E."/>
            <person name="Gibbons T."/>
            <person name="Weber N."/>
            <person name="Vandenbol M."/>
            <person name="Bargues M."/>
            <person name="Terol J."/>
            <person name="Torres A."/>
            <person name="Perez-Perez A."/>
            <person name="Purnelle B."/>
            <person name="Bent E."/>
            <person name="Johnson S."/>
            <person name="Tacon D."/>
            <person name="Jesse T."/>
            <person name="Heijnen L."/>
            <person name="Schwarz S."/>
            <person name="Scholler P."/>
            <person name="Heber S."/>
            <person name="Francs P."/>
            <person name="Bielke C."/>
            <person name="Frishman D."/>
            <person name="Haase D."/>
            <person name="Lemcke K."/>
            <person name="Mewes H.-W."/>
            <person name="Stocker S."/>
            <person name="Zaccaria P."/>
            <person name="Bevan M."/>
            <person name="Wilson R.K."/>
            <person name="de la Bastide M."/>
            <person name="Habermann K."/>
            <person name="Parnell L."/>
            <person name="Dedhia N."/>
            <person name="Gnoj L."/>
            <person name="Schutz K."/>
            <person name="Huang E."/>
            <person name="Spiegel L."/>
            <person name="Sekhon M."/>
            <person name="Murray J."/>
            <person name="Sheet P."/>
            <person name="Cordes M."/>
            <person name="Abu-Threideh J."/>
            <person name="Stoneking T."/>
            <person name="Kalicki J."/>
            <person name="Graves T."/>
            <person name="Harmon G."/>
            <person name="Edwards J."/>
            <person name="Latreille P."/>
            <person name="Courtney L."/>
            <person name="Cloud J."/>
            <person name="Abbott A."/>
            <person name="Scott K."/>
            <person name="Johnson D."/>
            <person name="Minx P."/>
            <person name="Bentley D."/>
            <person name="Fulton B."/>
            <person name="Miller N."/>
            <person name="Greco T."/>
            <person name="Kemp K."/>
            <person name="Kramer J."/>
            <person name="Fulton L."/>
            <person name="Mardis E."/>
            <person name="Dante M."/>
            <person name="Pepin K."/>
            <person name="Hillier L.W."/>
            <person name="Nelson J."/>
            <person name="Spieth J."/>
            <person name="Ryan E."/>
            <person name="Andrews S."/>
            <person name="Geisel C."/>
            <person name="Layman D."/>
            <person name="Du H."/>
            <person name="Ali J."/>
            <person name="Berghoff A."/>
            <person name="Jones K."/>
            <person name="Drone K."/>
            <person name="Cotton M."/>
            <person name="Joshu C."/>
            <person name="Antonoiu B."/>
            <person name="Zidanic M."/>
            <person name="Strong C."/>
            <person name="Sun H."/>
            <person name="Lamar B."/>
            <person name="Yordan C."/>
            <person name="Ma P."/>
            <person name="Zhong J."/>
            <person name="Preston R."/>
            <person name="Vil D."/>
            <person name="Shekher M."/>
            <person name="Matero A."/>
            <person name="Shah R."/>
            <person name="Swaby I.K."/>
            <person name="O'Shaughnessy A."/>
            <person name="Rodriguez M."/>
            <person name="Hoffman J."/>
            <person name="Till S."/>
            <person name="Granat S."/>
            <person name="Shohdy N."/>
            <person name="Hasegawa A."/>
            <person name="Hameed A."/>
            <person name="Lodhi M."/>
            <person name="Johnson A."/>
            <person name="Chen E."/>
            <person name="Marra M.A."/>
            <person name="Martienssen R."/>
            <person name="McCombie W.R."/>
        </authorList>
    </citation>
    <scope>NUCLEOTIDE SEQUENCE [LARGE SCALE GENOMIC DNA]</scope>
    <source>
        <strain>cv. Columbia</strain>
    </source>
</reference>
<reference key="3">
    <citation type="journal article" date="2017" name="Plant J.">
        <title>Araport11: a complete reannotation of the Arabidopsis thaliana reference genome.</title>
        <authorList>
            <person name="Cheng C.Y."/>
            <person name="Krishnakumar V."/>
            <person name="Chan A.P."/>
            <person name="Thibaud-Nissen F."/>
            <person name="Schobel S."/>
            <person name="Town C.D."/>
        </authorList>
    </citation>
    <scope>GENOME REANNOTATION</scope>
    <source>
        <strain>cv. Columbia</strain>
    </source>
</reference>
<reference key="4">
    <citation type="submission" date="2008-06" db="EMBL/GenBank/DDBJ databases">
        <title>Arabidopsis ORF clones.</title>
        <authorList>
            <person name="De Los Reyes C."/>
            <person name="Quan R."/>
            <person name="Chen H."/>
            <person name="Bautista V.R."/>
            <person name="Kim C.J."/>
            <person name="Ecker J.R."/>
        </authorList>
    </citation>
    <scope>NUCLEOTIDE SEQUENCE [LARGE SCALE MRNA]</scope>
    <source>
        <strain>cv. Columbia</strain>
    </source>
</reference>
<reference key="5">
    <citation type="journal article" date="2003" name="Science">
        <title>Empirical analysis of transcriptional activity in the Arabidopsis genome.</title>
        <authorList>
            <person name="Yamada K."/>
            <person name="Lim J."/>
            <person name="Dale J.M."/>
            <person name="Chen H."/>
            <person name="Shinn P."/>
            <person name="Palm C.J."/>
            <person name="Southwick A.M."/>
            <person name="Wu H.C."/>
            <person name="Kim C.J."/>
            <person name="Nguyen M."/>
            <person name="Pham P.K."/>
            <person name="Cheuk R.F."/>
            <person name="Karlin-Newmann G."/>
            <person name="Liu S.X."/>
            <person name="Lam B."/>
            <person name="Sakano H."/>
            <person name="Wu T."/>
            <person name="Yu G."/>
            <person name="Miranda M."/>
            <person name="Quach H.L."/>
            <person name="Tripp M."/>
            <person name="Chang C.H."/>
            <person name="Lee J.M."/>
            <person name="Toriumi M.J."/>
            <person name="Chan M.M."/>
            <person name="Tang C.C."/>
            <person name="Onodera C.S."/>
            <person name="Deng J.M."/>
            <person name="Akiyama K."/>
            <person name="Ansari Y."/>
            <person name="Arakawa T."/>
            <person name="Banh J."/>
            <person name="Banno F."/>
            <person name="Bowser L."/>
            <person name="Brooks S.Y."/>
            <person name="Carninci P."/>
            <person name="Chao Q."/>
            <person name="Choy N."/>
            <person name="Enju A."/>
            <person name="Goldsmith A.D."/>
            <person name="Gurjal M."/>
            <person name="Hansen N.F."/>
            <person name="Hayashizaki Y."/>
            <person name="Johnson-Hopson C."/>
            <person name="Hsuan V.W."/>
            <person name="Iida K."/>
            <person name="Karnes M."/>
            <person name="Khan S."/>
            <person name="Koesema E."/>
            <person name="Ishida J."/>
            <person name="Jiang P.X."/>
            <person name="Jones T."/>
            <person name="Kawai J."/>
            <person name="Kamiya A."/>
            <person name="Meyers C."/>
            <person name="Nakajima M."/>
            <person name="Narusaka M."/>
            <person name="Seki M."/>
            <person name="Sakurai T."/>
            <person name="Satou M."/>
            <person name="Tamse R."/>
            <person name="Vaysberg M."/>
            <person name="Wallender E.K."/>
            <person name="Wong C."/>
            <person name="Yamamura Y."/>
            <person name="Yuan S."/>
            <person name="Shinozaki K."/>
            <person name="Davis R.W."/>
            <person name="Theologis A."/>
            <person name="Ecker J.R."/>
        </authorList>
    </citation>
    <scope>NUCLEOTIDE SEQUENCE [LARGE SCALE MRNA] OF 54-531</scope>
    <source>
        <strain>cv. Columbia</strain>
    </source>
</reference>
<reference key="6">
    <citation type="journal article" date="1998" name="Plant J.">
        <title>Genetic evidence that the endodermis is essential for shoot gravitropism in Arabidopsis thaliana.</title>
        <authorList>
            <person name="Fukaki H."/>
            <person name="Wysocka-Diller J.W."/>
            <person name="Kato T."/>
            <person name="Fujisawa H."/>
            <person name="Benfey P.N."/>
            <person name="Tasaka M."/>
        </authorList>
    </citation>
    <scope>IDENTIFICATION</scope>
    <scope>FUNCTION</scope>
</reference>
<reference key="7">
    <citation type="journal article" date="2001" name="Nature">
        <title>Intercellular movement of the putative transcription factor SHR in root patterning.</title>
        <authorList>
            <person name="Nakajima K."/>
            <person name="Sena G."/>
            <person name="Nawy T."/>
            <person name="Benfey P.N."/>
        </authorList>
    </citation>
    <scope>TISSUE SPECIFICITY</scope>
    <scope>SUBCELLULAR LOCATION</scope>
    <scope>TRANSLOCATION</scope>
</reference>
<reference key="8">
    <citation type="journal article" date="2003" name="Genes Dev.">
        <title>SCARECROW is involved in positioning the stem cell niche in the Arabidopsis root meristem.</title>
        <authorList>
            <person name="Sabatini S."/>
            <person name="Heidstra R."/>
            <person name="Wildwater M."/>
            <person name="Scheres B."/>
        </authorList>
    </citation>
    <scope>FUNCTION</scope>
</reference>
<reference key="9">
    <citation type="journal article" date="2004" name="Genes Dev.">
        <title>Mosaic analyses using marked activation and deletion clones dissect Arabidopsis SCARECROW action in asymmetric cell division.</title>
        <authorList>
            <person name="Heidstra R."/>
            <person name="Welch D."/>
            <person name="Scheres B."/>
        </authorList>
    </citation>
    <scope>FUNCTION</scope>
    <scope>TISSUE SPECIFICITY</scope>
</reference>
<reference key="10">
    <citation type="journal article" date="2004" name="Development">
        <title>A broad competence to respond to SHORT ROOT revealed by tissue-specific ectopic expression.</title>
        <authorList>
            <person name="Sena G."/>
            <person name="Jung J.W."/>
            <person name="Benfey P.N."/>
        </authorList>
    </citation>
    <scope>TISSUE SPECIFICITY</scope>
    <scope>TRANSLOCATION</scope>
</reference>
<reference key="11">
    <citation type="journal article" date="2004" name="Curr. Biol.">
        <title>Mechanisms regulating SHORT-ROOT intercellular movement.</title>
        <authorList>
            <person name="Gallagher K.L."/>
            <person name="Paquette A.J."/>
            <person name="Nakajima K."/>
            <person name="Benfey P.N."/>
        </authorList>
    </citation>
    <scope>SUBCELLULAR LOCATION</scope>
    <scope>MUTAGENESIS OF THR-289</scope>
</reference>
<reference key="12">
    <citation type="journal article" date="2006" name="PLoS Biol.">
        <title>Whole-genome analysis of the SHORT-ROOT developmental pathway in Arabidopsis.</title>
        <authorList>
            <person name="Levesque M.P."/>
            <person name="Vernoux T."/>
            <person name="Busch W."/>
            <person name="Cui H."/>
            <person name="Wang J.Y."/>
            <person name="Blilou I."/>
            <person name="Hassan H."/>
            <person name="Nakajima K."/>
            <person name="Matsumoto N."/>
            <person name="Lohmann J.U."/>
            <person name="Scheres B."/>
            <person name="Benfey P.N."/>
        </authorList>
    </citation>
    <scope>FUNCTION</scope>
    <scope>INTERACTION WITH SCR</scope>
</reference>
<reference key="13">
    <citation type="journal article" date="2007" name="Science">
        <title>An evolutionarily conserved mechanism delimiting SHR movement defines a single layer of endodermis in plants.</title>
        <authorList>
            <person name="Cui H."/>
            <person name="Levesque M.P."/>
            <person name="Vernoux T."/>
            <person name="Jung J.W."/>
            <person name="Paquette A.J."/>
            <person name="Gallagher K.L."/>
            <person name="Wang J.Y."/>
            <person name="Blilou I."/>
            <person name="Scheres B."/>
            <person name="Benfey P.N."/>
        </authorList>
    </citation>
    <scope>FUNCTION</scope>
    <scope>INTERACTION WITH SCR</scope>
</reference>
<reference key="14">
    <citation type="journal article" date="2007" name="Genes Dev.">
        <title>Arabidopsis JACKDAW and MAGPIE zinc finger proteins delimit asymmetric cell division and stabilize tissue boundaries by restricting SHORT-ROOT action.</title>
        <authorList>
            <person name="Welch D."/>
            <person name="Hassan H."/>
            <person name="Blilou I."/>
            <person name="Immink R."/>
            <person name="Heidstra R."/>
            <person name="Scheres B."/>
        </authorList>
    </citation>
    <scope>INTERACTION WITH JKD AND MGP</scope>
</reference>
<reference key="15">
    <citation type="journal article" date="2008" name="Plant Mol. Biol.">
        <title>Large-scale analysis of the GRAS gene family in Arabidopsis thaliana.</title>
        <authorList>
            <person name="Lee M.-H."/>
            <person name="Kim B."/>
            <person name="Song S.-K."/>
            <person name="Heo J.-O."/>
            <person name="Yu N.-I."/>
            <person name="Lee S.A."/>
            <person name="Kim M."/>
            <person name="Kim D.G."/>
            <person name="Sohn S.O."/>
            <person name="Lim C.E."/>
            <person name="Chang K.S."/>
            <person name="Lee M.M."/>
            <person name="Lim J."/>
        </authorList>
    </citation>
    <scope>INTERACTION WITH SCR AND SCL23</scope>
</reference>
<reference key="16">
    <citation type="journal article" date="2009" name="Plant J.">
        <title>Both the conserved GRAS domain and nuclear localization are required for SHORT-ROOT movement.</title>
        <authorList>
            <person name="Gallagher K.L."/>
            <person name="Benfey P.N."/>
        </authorList>
    </citation>
    <scope>MUTAGENESIS OF 342-LEU--VAL-347</scope>
    <scope>MISCELLANEOUS</scope>
</reference>
<reference key="17">
    <citation type="journal article" date="2011" name="Curr. Biol.">
        <title>An essential protein that interacts with endosomes and promotes movement of the SHORT-ROOT transcription factor.</title>
        <authorList>
            <person name="Koizumi K."/>
            <person name="Wu S."/>
            <person name="MacRae-Crerar A."/>
            <person name="Gallagher K.L."/>
        </authorList>
    </citation>
    <scope>INTERACTION WITH SIEL</scope>
    <scope>MISCELLANEOUS</scope>
</reference>
<reference key="18">
    <citation type="journal article" date="2013" name="Plant J.">
        <title>Intact microtubules are required for the intercellular movement of the SHORT-ROOT transcription factor.</title>
        <authorList>
            <person name="Wu S."/>
            <person name="Gallagher K.L."/>
        </authorList>
    </citation>
    <scope>MISCELLANEOUS</scope>
</reference>
<reference key="19">
    <citation type="journal article" date="2014" name="Plant J.">
        <title>The movement of the non-cell-autonomous transcription factor, SHORT-ROOT relies on the endomembrane system.</title>
        <authorList>
            <person name="Wu S."/>
            <person name="Gallagher K.L."/>
        </authorList>
    </citation>
    <scope>SUBCELLULAR LOCATION</scope>
</reference>
<reference key="20">
    <citation type="journal article" date="2017" name="Nat. Plants">
        <title>Structure of the SHR-SCR heterodimer bound to the BIRD/IDD transcriptional factor JKD.</title>
        <authorList>
            <person name="Hirano Y."/>
            <person name="Nakagawa M."/>
            <person name="Suyama T."/>
            <person name="Murase K."/>
            <person name="Shirakawa M."/>
            <person name="Takayama S."/>
            <person name="Sun T.-P."/>
            <person name="Hakoshima T."/>
        </authorList>
    </citation>
    <scope>X-RAY CRYSTALLOGRAPHY (2.00 ANGSTROMS) OF 59-531 IN COMPLEX WITH SCR AND JKD</scope>
    <scope>INTERACTION WITH SCR</scope>
    <scope>MUTAGENESIS OF LEU-166; TRP-167; ASN-170; GLU-171; TYR-176; ARG-436 AND ARG-441</scope>
</reference>
<keyword id="KW-0002">3D-structure</keyword>
<keyword id="KW-0963">Cytoplasm</keyword>
<keyword id="KW-0217">Developmental protein</keyword>
<keyword id="KW-0967">Endosome</keyword>
<keyword id="KW-0539">Nucleus</keyword>
<keyword id="KW-1185">Reference proteome</keyword>
<keyword id="KW-0804">Transcription</keyword>
<keyword id="KW-0805">Transcription regulation</keyword>
<name>SHR_ARATH</name>